<dbReference type="EMBL" id="CU329671">
    <property type="protein sequence ID" value="CAB46667.2"/>
    <property type="molecule type" value="Genomic_DNA"/>
</dbReference>
<dbReference type="PIR" id="T37979">
    <property type="entry name" value="T37979"/>
</dbReference>
<dbReference type="BioGRID" id="277418">
    <property type="interactions" value="7"/>
</dbReference>
<dbReference type="STRING" id="284812.Q10338"/>
<dbReference type="PaxDb" id="4896-SPBC582.04c.1"/>
<dbReference type="EnsemblFungi" id="SPBC582.04c.1">
    <property type="protein sequence ID" value="SPBC582.04c.1:pep"/>
    <property type="gene ID" value="SPBC582.04c"/>
</dbReference>
<dbReference type="KEGG" id="spo:2540902"/>
<dbReference type="PomBase" id="SPBC582.04c"/>
<dbReference type="VEuPathDB" id="FungiDB:SPBC582.04c"/>
<dbReference type="HOGENOM" id="CLU_467812_0_0_1"/>
<dbReference type="InParanoid" id="Q10338"/>
<dbReference type="OMA" id="GLSFWDP"/>
<dbReference type="PRO" id="PR:Q10338"/>
<dbReference type="Proteomes" id="UP000002485">
    <property type="component" value="Chromosome II"/>
</dbReference>
<dbReference type="GO" id="GO:0005730">
    <property type="term" value="C:nucleolus"/>
    <property type="evidence" value="ECO:0007005"/>
    <property type="project" value="PomBase"/>
</dbReference>
<dbReference type="GO" id="GO:0005634">
    <property type="term" value="C:nucleus"/>
    <property type="evidence" value="ECO:0000314"/>
    <property type="project" value="PomBase"/>
</dbReference>
<dbReference type="GO" id="GO:0005721">
    <property type="term" value="C:pericentric heterochromatin"/>
    <property type="evidence" value="ECO:0000314"/>
    <property type="project" value="PomBase"/>
</dbReference>
<dbReference type="GO" id="GO:0030466">
    <property type="term" value="P:silent mating-type cassette heterochromatin formation"/>
    <property type="evidence" value="ECO:0000316"/>
    <property type="project" value="PomBase"/>
</dbReference>
<dbReference type="GO" id="GO:0140727">
    <property type="term" value="P:siRNA-mediated pericentric heterochromatin formation"/>
    <property type="evidence" value="ECO:0000315"/>
    <property type="project" value="PomBase"/>
</dbReference>
<dbReference type="InterPro" id="IPR057227">
    <property type="entry name" value="DUF7905"/>
</dbReference>
<dbReference type="Pfam" id="PF25482">
    <property type="entry name" value="DUF7905"/>
    <property type="match status" value="1"/>
</dbReference>
<proteinExistence type="predicted"/>
<accession>Q10338</accession>
<organism>
    <name type="scientific">Schizosaccharomyces pombe (strain 972 / ATCC 24843)</name>
    <name type="common">Fission yeast</name>
    <dbReference type="NCBI Taxonomy" id="284812"/>
    <lineage>
        <taxon>Eukaryota</taxon>
        <taxon>Fungi</taxon>
        <taxon>Dikarya</taxon>
        <taxon>Ascomycota</taxon>
        <taxon>Taphrinomycotina</taxon>
        <taxon>Schizosaccharomycetes</taxon>
        <taxon>Schizosaccharomycetales</taxon>
        <taxon>Schizosaccharomycetaceae</taxon>
        <taxon>Schizosaccharomyces</taxon>
    </lineage>
</organism>
<reference key="1">
    <citation type="journal article" date="2002" name="Nature">
        <title>The genome sequence of Schizosaccharomyces pombe.</title>
        <authorList>
            <person name="Wood V."/>
            <person name="Gwilliam R."/>
            <person name="Rajandream M.A."/>
            <person name="Lyne M.H."/>
            <person name="Lyne R."/>
            <person name="Stewart A."/>
            <person name="Sgouros J.G."/>
            <person name="Peat N."/>
            <person name="Hayles J."/>
            <person name="Baker S.G."/>
            <person name="Basham D."/>
            <person name="Bowman S."/>
            <person name="Brooks K."/>
            <person name="Brown D."/>
            <person name="Brown S."/>
            <person name="Chillingworth T."/>
            <person name="Churcher C.M."/>
            <person name="Collins M."/>
            <person name="Connor R."/>
            <person name="Cronin A."/>
            <person name="Davis P."/>
            <person name="Feltwell T."/>
            <person name="Fraser A."/>
            <person name="Gentles S."/>
            <person name="Goble A."/>
            <person name="Hamlin N."/>
            <person name="Harris D.E."/>
            <person name="Hidalgo J."/>
            <person name="Hodgson G."/>
            <person name="Holroyd S."/>
            <person name="Hornsby T."/>
            <person name="Howarth S."/>
            <person name="Huckle E.J."/>
            <person name="Hunt S."/>
            <person name="Jagels K."/>
            <person name="James K.D."/>
            <person name="Jones L."/>
            <person name="Jones M."/>
            <person name="Leather S."/>
            <person name="McDonald S."/>
            <person name="McLean J."/>
            <person name="Mooney P."/>
            <person name="Moule S."/>
            <person name="Mungall K.L."/>
            <person name="Murphy L.D."/>
            <person name="Niblett D."/>
            <person name="Odell C."/>
            <person name="Oliver K."/>
            <person name="O'Neil S."/>
            <person name="Pearson D."/>
            <person name="Quail M.A."/>
            <person name="Rabbinowitsch E."/>
            <person name="Rutherford K.M."/>
            <person name="Rutter S."/>
            <person name="Saunders D."/>
            <person name="Seeger K."/>
            <person name="Sharp S."/>
            <person name="Skelton J."/>
            <person name="Simmonds M.N."/>
            <person name="Squares R."/>
            <person name="Squares S."/>
            <person name="Stevens K."/>
            <person name="Taylor K."/>
            <person name="Taylor R.G."/>
            <person name="Tivey A."/>
            <person name="Walsh S.V."/>
            <person name="Warren T."/>
            <person name="Whitehead S."/>
            <person name="Woodward J.R."/>
            <person name="Volckaert G."/>
            <person name="Aert R."/>
            <person name="Robben J."/>
            <person name="Grymonprez B."/>
            <person name="Weltjens I."/>
            <person name="Vanstreels E."/>
            <person name="Rieger M."/>
            <person name="Schaefer M."/>
            <person name="Mueller-Auer S."/>
            <person name="Gabel C."/>
            <person name="Fuchs M."/>
            <person name="Duesterhoeft A."/>
            <person name="Fritzc C."/>
            <person name="Holzer E."/>
            <person name="Moestl D."/>
            <person name="Hilbert H."/>
            <person name="Borzym K."/>
            <person name="Langer I."/>
            <person name="Beck A."/>
            <person name="Lehrach H."/>
            <person name="Reinhardt R."/>
            <person name="Pohl T.M."/>
            <person name="Eger P."/>
            <person name="Zimmermann W."/>
            <person name="Wedler H."/>
            <person name="Wambutt R."/>
            <person name="Purnelle B."/>
            <person name="Goffeau A."/>
            <person name="Cadieu E."/>
            <person name="Dreano S."/>
            <person name="Gloux S."/>
            <person name="Lelaure V."/>
            <person name="Mottier S."/>
            <person name="Galibert F."/>
            <person name="Aves S.J."/>
            <person name="Xiang Z."/>
            <person name="Hunt C."/>
            <person name="Moore K."/>
            <person name="Hurst S.M."/>
            <person name="Lucas M."/>
            <person name="Rochet M."/>
            <person name="Gaillardin C."/>
            <person name="Tallada V.A."/>
            <person name="Garzon A."/>
            <person name="Thode G."/>
            <person name="Daga R.R."/>
            <person name="Cruzado L."/>
            <person name="Jimenez J."/>
            <person name="Sanchez M."/>
            <person name="del Rey F."/>
            <person name="Benito J."/>
            <person name="Dominguez A."/>
            <person name="Revuelta J.L."/>
            <person name="Moreno S."/>
            <person name="Armstrong J."/>
            <person name="Forsburg S.L."/>
            <person name="Cerutti L."/>
            <person name="Lowe T."/>
            <person name="McCombie W.R."/>
            <person name="Paulsen I."/>
            <person name="Potashkin J."/>
            <person name="Shpakovski G.V."/>
            <person name="Ussery D."/>
            <person name="Barrell B.G."/>
            <person name="Nurse P."/>
        </authorList>
    </citation>
    <scope>NUCLEOTIDE SEQUENCE [LARGE SCALE GENOMIC DNA]</scope>
    <source>
        <strain>972 / ATCC 24843</strain>
    </source>
</reference>
<keyword id="KW-1185">Reference proteome</keyword>
<protein>
    <recommendedName>
        <fullName>Uncharacterized protein C582.04c</fullName>
    </recommendedName>
</protein>
<name>YBM4_SCHPO</name>
<feature type="chain" id="PRO_0000116517" description="Uncharacterized protein C582.04c">
    <location>
        <begin position="1"/>
        <end position="583"/>
    </location>
</feature>
<gene>
    <name type="ORF">SPBC582.04c</name>
</gene>
<sequence>MAENKKFSIRKKRECSYPTFRTLYEFNKFFLRYKTEISKIQRRTSSLIQYEEHSSAIFIYYETPQMFDLATKALQTLYNSHTREGETKAASKWYRNPRKDFPSQEAALVRKKKRDALILKKYLLNVDPSLSFRAEGLFTLPSDDLDVYEFFGGENLTLFNQVRVDCQCYIHYLPKLAAFYVRCDSVKNLKVALKRVKHIFYEQVSLIRLERTQPILHLMNFDDYSTSYELFYDRNFPLAKKYKPNSIYLHRLPESIPTPVDSVKINLIRERSFNLLKNFVSASLFNVFLFSGTVFMRVKVGIPLFERLKVGTNKVKNNSVNIAQSFLEPQTRSTFLRYLFSDEVSVKVCHVLKELRSPTGEKLFESFSDDPITAVHFEVMNCKGVQDTLTAIWNTNSGKPSGWYLESTMYKALDVTYYNLNTLSWNLYIEYGHPTQNSTFYKEFISNISMSDDGRIYFMNTRDIKVRSLVVKLKHKYWHLSSGFHLHITRFEAHDMGKVKDIDTDFEPGLQCYQVGSDTSVLRYGLSFWDPKWDYLLADNQHKQQWQAPSYKPLISEFFPMGIEHFIETAQSIVMAVNRSTID</sequence>